<comment type="function">
    <text evidence="1">Cleaves the N-terminal amino acid of tripeptides.</text>
</comment>
<comment type="catalytic activity">
    <reaction evidence="1">
        <text>Release of the N-terminal residue from a tripeptide.</text>
        <dbReference type="EC" id="3.4.11.4"/>
    </reaction>
</comment>
<comment type="cofactor">
    <cofactor evidence="1">
        <name>Zn(2+)</name>
        <dbReference type="ChEBI" id="CHEBI:29105"/>
    </cofactor>
    <text evidence="1">Binds 2 Zn(2+) ions per subunit.</text>
</comment>
<comment type="subcellular location">
    <subcellularLocation>
        <location evidence="1">Cytoplasm</location>
    </subcellularLocation>
</comment>
<comment type="similarity">
    <text evidence="1">Belongs to the peptidase M20B family.</text>
</comment>
<protein>
    <recommendedName>
        <fullName evidence="1">Peptidase T</fullName>
        <ecNumber evidence="1">3.4.11.4</ecNumber>
    </recommendedName>
    <alternativeName>
        <fullName evidence="1">Aminotripeptidase</fullName>
        <shortName evidence="1">Tripeptidase</shortName>
    </alternativeName>
    <alternativeName>
        <fullName evidence="1">Tripeptide aminopeptidase</fullName>
    </alternativeName>
</protein>
<reference key="1">
    <citation type="journal article" date="2004" name="J. Mol. Microbiol. Biotechnol.">
        <title>The complete genome sequence of Bacillus licheniformis DSM13, an organism with great industrial potential.</title>
        <authorList>
            <person name="Veith B."/>
            <person name="Herzberg C."/>
            <person name="Steckel S."/>
            <person name="Feesche J."/>
            <person name="Maurer K.H."/>
            <person name="Ehrenreich P."/>
            <person name="Baeumer S."/>
            <person name="Henne A."/>
            <person name="Liesegang H."/>
            <person name="Merkl R."/>
            <person name="Ehrenreich A."/>
            <person name="Gottschalk G."/>
        </authorList>
    </citation>
    <scope>NUCLEOTIDE SEQUENCE [LARGE SCALE GENOMIC DNA]</scope>
    <source>
        <strain>ATCC 14580 / DSM 13 / JCM 2505 / CCUG 7422 / NBRC 12200 / NCIMB 9375 / NCTC 10341 / NRRL NRS-1264 / Gibson 46</strain>
    </source>
</reference>
<reference key="2">
    <citation type="journal article" date="2004" name="Genome Biol.">
        <title>Complete genome sequence of the industrial bacterium Bacillus licheniformis and comparisons with closely related Bacillus species.</title>
        <authorList>
            <person name="Rey M.W."/>
            <person name="Ramaiya P."/>
            <person name="Nelson B.A."/>
            <person name="Brody-Karpin S.D."/>
            <person name="Zaretsky E.J."/>
            <person name="Tang M."/>
            <person name="Lopez de Leon A."/>
            <person name="Xiang H."/>
            <person name="Gusti V."/>
            <person name="Clausen I.G."/>
            <person name="Olsen P.B."/>
            <person name="Rasmussen M.D."/>
            <person name="Andersen J.T."/>
            <person name="Joergensen P.L."/>
            <person name="Larsen T.S."/>
            <person name="Sorokin A."/>
            <person name="Bolotin A."/>
            <person name="Lapidus A."/>
            <person name="Galleron N."/>
            <person name="Ehrlich S.D."/>
            <person name="Berka R.M."/>
        </authorList>
    </citation>
    <scope>NUCLEOTIDE SEQUENCE [LARGE SCALE GENOMIC DNA]</scope>
    <source>
        <strain>ATCC 14580 / DSM 13 / JCM 2505 / CCUG 7422 / NBRC 12200 / NCIMB 9375 / NCTC 10341 / NRRL NRS-1264 / Gibson 46</strain>
    </source>
</reference>
<gene>
    <name evidence="1" type="primary">pepT</name>
    <name type="ordered locus">BLi04177</name>
    <name type="ordered locus">BL01918</name>
</gene>
<dbReference type="EC" id="3.4.11.4" evidence="1"/>
<dbReference type="EMBL" id="AE017333">
    <property type="protein sequence ID" value="AAU42990.1"/>
    <property type="molecule type" value="Genomic_DNA"/>
</dbReference>
<dbReference type="EMBL" id="CP000002">
    <property type="protein sequence ID" value="AAU25611.1"/>
    <property type="molecule type" value="Genomic_DNA"/>
</dbReference>
<dbReference type="RefSeq" id="WP_003186466.1">
    <property type="nucleotide sequence ID" value="NC_006322.1"/>
</dbReference>
<dbReference type="SMR" id="Q65D74"/>
<dbReference type="STRING" id="279010.BL01918"/>
<dbReference type="MEROPS" id="M20.003"/>
<dbReference type="GeneID" id="92859252"/>
<dbReference type="KEGG" id="bld:BLi04177"/>
<dbReference type="KEGG" id="bli:BL01918"/>
<dbReference type="eggNOG" id="COG2195">
    <property type="taxonomic scope" value="Bacteria"/>
</dbReference>
<dbReference type="HOGENOM" id="CLU_053676_0_0_9"/>
<dbReference type="Proteomes" id="UP000000606">
    <property type="component" value="Chromosome"/>
</dbReference>
<dbReference type="GO" id="GO:0005829">
    <property type="term" value="C:cytosol"/>
    <property type="evidence" value="ECO:0007669"/>
    <property type="project" value="TreeGrafter"/>
</dbReference>
<dbReference type="GO" id="GO:0008237">
    <property type="term" value="F:metallopeptidase activity"/>
    <property type="evidence" value="ECO:0007669"/>
    <property type="project" value="UniProtKB-KW"/>
</dbReference>
<dbReference type="GO" id="GO:0045148">
    <property type="term" value="F:tripeptide aminopeptidase activity"/>
    <property type="evidence" value="ECO:0007669"/>
    <property type="project" value="UniProtKB-UniRule"/>
</dbReference>
<dbReference type="GO" id="GO:0008270">
    <property type="term" value="F:zinc ion binding"/>
    <property type="evidence" value="ECO:0007669"/>
    <property type="project" value="UniProtKB-UniRule"/>
</dbReference>
<dbReference type="GO" id="GO:0043171">
    <property type="term" value="P:peptide catabolic process"/>
    <property type="evidence" value="ECO:0007669"/>
    <property type="project" value="UniProtKB-UniRule"/>
</dbReference>
<dbReference type="GO" id="GO:0006508">
    <property type="term" value="P:proteolysis"/>
    <property type="evidence" value="ECO:0007669"/>
    <property type="project" value="UniProtKB-UniRule"/>
</dbReference>
<dbReference type="CDD" id="cd03892">
    <property type="entry name" value="M20_peptT"/>
    <property type="match status" value="1"/>
</dbReference>
<dbReference type="FunFam" id="3.30.70.360:FF:000002">
    <property type="entry name" value="Peptidase T"/>
    <property type="match status" value="1"/>
</dbReference>
<dbReference type="Gene3D" id="3.30.70.360">
    <property type="match status" value="1"/>
</dbReference>
<dbReference type="Gene3D" id="3.40.630.10">
    <property type="entry name" value="Zn peptidases"/>
    <property type="match status" value="1"/>
</dbReference>
<dbReference type="HAMAP" id="MF_00550">
    <property type="entry name" value="Aminopeptidase_M20"/>
    <property type="match status" value="1"/>
</dbReference>
<dbReference type="InterPro" id="IPR001261">
    <property type="entry name" value="ArgE/DapE_CS"/>
</dbReference>
<dbReference type="InterPro" id="IPR036264">
    <property type="entry name" value="Bact_exopeptidase_dim_dom"/>
</dbReference>
<dbReference type="InterPro" id="IPR002933">
    <property type="entry name" value="Peptidase_M20"/>
</dbReference>
<dbReference type="InterPro" id="IPR011650">
    <property type="entry name" value="Peptidase_M20_dimer"/>
</dbReference>
<dbReference type="InterPro" id="IPR010161">
    <property type="entry name" value="Peptidase_M20B"/>
</dbReference>
<dbReference type="NCBIfam" id="TIGR01882">
    <property type="entry name" value="peptidase-T"/>
    <property type="match status" value="1"/>
</dbReference>
<dbReference type="NCBIfam" id="NF003976">
    <property type="entry name" value="PRK05469.1"/>
    <property type="match status" value="1"/>
</dbReference>
<dbReference type="NCBIfam" id="NF009920">
    <property type="entry name" value="PRK13381.1"/>
    <property type="match status" value="1"/>
</dbReference>
<dbReference type="PANTHER" id="PTHR42994">
    <property type="entry name" value="PEPTIDASE T"/>
    <property type="match status" value="1"/>
</dbReference>
<dbReference type="PANTHER" id="PTHR42994:SF1">
    <property type="entry name" value="PEPTIDASE T"/>
    <property type="match status" value="1"/>
</dbReference>
<dbReference type="Pfam" id="PF07687">
    <property type="entry name" value="M20_dimer"/>
    <property type="match status" value="1"/>
</dbReference>
<dbReference type="Pfam" id="PF01546">
    <property type="entry name" value="Peptidase_M20"/>
    <property type="match status" value="1"/>
</dbReference>
<dbReference type="PIRSF" id="PIRSF037215">
    <property type="entry name" value="Peptidase_M20B"/>
    <property type="match status" value="1"/>
</dbReference>
<dbReference type="SUPFAM" id="SSF55031">
    <property type="entry name" value="Bacterial exopeptidase dimerisation domain"/>
    <property type="match status" value="1"/>
</dbReference>
<dbReference type="SUPFAM" id="SSF53187">
    <property type="entry name" value="Zn-dependent exopeptidases"/>
    <property type="match status" value="1"/>
</dbReference>
<dbReference type="PROSITE" id="PS00758">
    <property type="entry name" value="ARGE_DAPE_CPG2_1"/>
    <property type="match status" value="1"/>
</dbReference>
<dbReference type="PROSITE" id="PS00759">
    <property type="entry name" value="ARGE_DAPE_CPG2_2"/>
    <property type="match status" value="1"/>
</dbReference>
<accession>Q65D74</accession>
<accession>Q62NQ0</accession>
<evidence type="ECO:0000255" key="1">
    <source>
        <dbReference type="HAMAP-Rule" id="MF_00550"/>
    </source>
</evidence>
<keyword id="KW-0031">Aminopeptidase</keyword>
<keyword id="KW-0963">Cytoplasm</keyword>
<keyword id="KW-0378">Hydrolase</keyword>
<keyword id="KW-0479">Metal-binding</keyword>
<keyword id="KW-0482">Metalloprotease</keyword>
<keyword id="KW-0645">Protease</keyword>
<keyword id="KW-1185">Reference proteome</keyword>
<keyword id="KW-0862">Zinc</keyword>
<proteinExistence type="inferred from homology"/>
<sequence length="410" mass="45326">MKNKLIERLISYAKVDTQSNENSQTTPSTPGQLALANMLVEELKEIGMKDVTIDENGYVMATLPSNTEKEVPTIGFLAHVDTATDFTGKNVNPQVIEQYDGKDIVLNESLNVVLSPKEFPELADYAGHTLITTDGTTLLGADNKAGISEIMTAMEYLIAHPEIKHGKIRVAFTPDEEIGRGPHKFDVEAFNAKFAYTVDGGPLGELQYESFNAAAAKITCKGTNVHPGTAKGKMVNAAKIAMQFHAALPENEAPEFTEGYEGFYHLLSIKGDVSETSLSYIIRDFDRDRFNERKDTVQKIANNLKAKYGENSVTVDMNDQYYNMREKIEPVKEIVDIAYKAMKNLDIEPVVKPIRGGTDGSQLSYMGLPCPNIFTGGENFHGKYEYISADNMVKAANVIVEIVKLFEERA</sequence>
<feature type="chain" id="PRO_0000185282" description="Peptidase T">
    <location>
        <begin position="1"/>
        <end position="410"/>
    </location>
</feature>
<feature type="active site" evidence="1">
    <location>
        <position position="81"/>
    </location>
</feature>
<feature type="active site" description="Proton acceptor" evidence="1">
    <location>
        <position position="176"/>
    </location>
</feature>
<feature type="binding site" evidence="1">
    <location>
        <position position="79"/>
    </location>
    <ligand>
        <name>Zn(2+)</name>
        <dbReference type="ChEBI" id="CHEBI:29105"/>
        <label>1</label>
    </ligand>
</feature>
<feature type="binding site" evidence="1">
    <location>
        <position position="142"/>
    </location>
    <ligand>
        <name>Zn(2+)</name>
        <dbReference type="ChEBI" id="CHEBI:29105"/>
        <label>1</label>
    </ligand>
</feature>
<feature type="binding site" evidence="1">
    <location>
        <position position="142"/>
    </location>
    <ligand>
        <name>Zn(2+)</name>
        <dbReference type="ChEBI" id="CHEBI:29105"/>
        <label>2</label>
    </ligand>
</feature>
<feature type="binding site" evidence="1">
    <location>
        <position position="177"/>
    </location>
    <ligand>
        <name>Zn(2+)</name>
        <dbReference type="ChEBI" id="CHEBI:29105"/>
        <label>2</label>
    </ligand>
</feature>
<feature type="binding site" evidence="1">
    <location>
        <position position="199"/>
    </location>
    <ligand>
        <name>Zn(2+)</name>
        <dbReference type="ChEBI" id="CHEBI:29105"/>
        <label>1</label>
    </ligand>
</feature>
<feature type="binding site" evidence="1">
    <location>
        <position position="381"/>
    </location>
    <ligand>
        <name>Zn(2+)</name>
        <dbReference type="ChEBI" id="CHEBI:29105"/>
        <label>2</label>
    </ligand>
</feature>
<name>PEPT_BACLD</name>
<organism>
    <name type="scientific">Bacillus licheniformis (strain ATCC 14580 / DSM 13 / JCM 2505 / CCUG 7422 / NBRC 12200 / NCIMB 9375 / NCTC 10341 / NRRL NRS-1264 / Gibson 46)</name>
    <dbReference type="NCBI Taxonomy" id="279010"/>
    <lineage>
        <taxon>Bacteria</taxon>
        <taxon>Bacillati</taxon>
        <taxon>Bacillota</taxon>
        <taxon>Bacilli</taxon>
        <taxon>Bacillales</taxon>
        <taxon>Bacillaceae</taxon>
        <taxon>Bacillus</taxon>
    </lineage>
</organism>